<dbReference type="EC" id="6.1.1.1" evidence="1"/>
<dbReference type="EMBL" id="AF222894">
    <property type="protein sequence ID" value="AAF30523.1"/>
    <property type="molecule type" value="Genomic_DNA"/>
</dbReference>
<dbReference type="RefSeq" id="WP_006688855.1">
    <property type="nucleotide sequence ID" value="NC_002162.1"/>
</dbReference>
<dbReference type="SMR" id="Q9PR27"/>
<dbReference type="STRING" id="273119.UU117"/>
<dbReference type="EnsemblBacteria" id="AAF30523">
    <property type="protein sequence ID" value="AAF30523"/>
    <property type="gene ID" value="UU117"/>
</dbReference>
<dbReference type="GeneID" id="29672276"/>
<dbReference type="KEGG" id="uur:UU117"/>
<dbReference type="eggNOG" id="COG0162">
    <property type="taxonomic scope" value="Bacteria"/>
</dbReference>
<dbReference type="HOGENOM" id="CLU_024003_0_2_14"/>
<dbReference type="OrthoDB" id="9804243at2"/>
<dbReference type="Proteomes" id="UP000000423">
    <property type="component" value="Chromosome"/>
</dbReference>
<dbReference type="GO" id="GO:0005829">
    <property type="term" value="C:cytosol"/>
    <property type="evidence" value="ECO:0007669"/>
    <property type="project" value="TreeGrafter"/>
</dbReference>
<dbReference type="GO" id="GO:0005524">
    <property type="term" value="F:ATP binding"/>
    <property type="evidence" value="ECO:0007669"/>
    <property type="project" value="UniProtKB-UniRule"/>
</dbReference>
<dbReference type="GO" id="GO:0003723">
    <property type="term" value="F:RNA binding"/>
    <property type="evidence" value="ECO:0007669"/>
    <property type="project" value="UniProtKB-KW"/>
</dbReference>
<dbReference type="GO" id="GO:0004831">
    <property type="term" value="F:tyrosine-tRNA ligase activity"/>
    <property type="evidence" value="ECO:0007669"/>
    <property type="project" value="UniProtKB-UniRule"/>
</dbReference>
<dbReference type="GO" id="GO:0006437">
    <property type="term" value="P:tyrosyl-tRNA aminoacylation"/>
    <property type="evidence" value="ECO:0007669"/>
    <property type="project" value="UniProtKB-UniRule"/>
</dbReference>
<dbReference type="CDD" id="cd00805">
    <property type="entry name" value="TyrRS_core"/>
    <property type="match status" value="1"/>
</dbReference>
<dbReference type="FunFam" id="1.10.240.10:FF:000001">
    <property type="entry name" value="Tyrosine--tRNA ligase"/>
    <property type="match status" value="1"/>
</dbReference>
<dbReference type="Gene3D" id="3.40.50.620">
    <property type="entry name" value="HUPs"/>
    <property type="match status" value="1"/>
</dbReference>
<dbReference type="Gene3D" id="3.10.290.10">
    <property type="entry name" value="RNA-binding S4 domain"/>
    <property type="match status" value="1"/>
</dbReference>
<dbReference type="Gene3D" id="1.10.240.10">
    <property type="entry name" value="Tyrosyl-Transfer RNA Synthetase"/>
    <property type="match status" value="1"/>
</dbReference>
<dbReference type="HAMAP" id="MF_02006">
    <property type="entry name" value="Tyr_tRNA_synth_type1"/>
    <property type="match status" value="1"/>
</dbReference>
<dbReference type="InterPro" id="IPR001412">
    <property type="entry name" value="aa-tRNA-synth_I_CS"/>
</dbReference>
<dbReference type="InterPro" id="IPR002305">
    <property type="entry name" value="aa-tRNA-synth_Ic"/>
</dbReference>
<dbReference type="InterPro" id="IPR014729">
    <property type="entry name" value="Rossmann-like_a/b/a_fold"/>
</dbReference>
<dbReference type="InterPro" id="IPR036986">
    <property type="entry name" value="S4_RNA-bd_sf"/>
</dbReference>
<dbReference type="InterPro" id="IPR054608">
    <property type="entry name" value="SYY-like_C"/>
</dbReference>
<dbReference type="InterPro" id="IPR002307">
    <property type="entry name" value="Tyr-tRNA-ligase"/>
</dbReference>
<dbReference type="InterPro" id="IPR024088">
    <property type="entry name" value="Tyr-tRNA-ligase_bac-type"/>
</dbReference>
<dbReference type="InterPro" id="IPR024107">
    <property type="entry name" value="Tyr-tRNA-ligase_bac_1"/>
</dbReference>
<dbReference type="NCBIfam" id="TIGR00234">
    <property type="entry name" value="tyrS"/>
    <property type="match status" value="1"/>
</dbReference>
<dbReference type="PANTHER" id="PTHR11766:SF0">
    <property type="entry name" value="TYROSINE--TRNA LIGASE, MITOCHONDRIAL"/>
    <property type="match status" value="1"/>
</dbReference>
<dbReference type="PANTHER" id="PTHR11766">
    <property type="entry name" value="TYROSYL-TRNA SYNTHETASE"/>
    <property type="match status" value="1"/>
</dbReference>
<dbReference type="Pfam" id="PF22421">
    <property type="entry name" value="SYY_C-terminal"/>
    <property type="match status" value="1"/>
</dbReference>
<dbReference type="Pfam" id="PF00579">
    <property type="entry name" value="tRNA-synt_1b"/>
    <property type="match status" value="1"/>
</dbReference>
<dbReference type="PRINTS" id="PR01040">
    <property type="entry name" value="TRNASYNTHTYR"/>
</dbReference>
<dbReference type="SUPFAM" id="SSF55174">
    <property type="entry name" value="Alpha-L RNA-binding motif"/>
    <property type="match status" value="1"/>
</dbReference>
<dbReference type="SUPFAM" id="SSF52374">
    <property type="entry name" value="Nucleotidylyl transferase"/>
    <property type="match status" value="1"/>
</dbReference>
<dbReference type="PROSITE" id="PS00178">
    <property type="entry name" value="AA_TRNA_LIGASE_I"/>
    <property type="match status" value="1"/>
</dbReference>
<dbReference type="PROSITE" id="PS50889">
    <property type="entry name" value="S4"/>
    <property type="match status" value="1"/>
</dbReference>
<evidence type="ECO:0000255" key="1">
    <source>
        <dbReference type="HAMAP-Rule" id="MF_02006"/>
    </source>
</evidence>
<reference key="1">
    <citation type="journal article" date="2000" name="Nature">
        <title>The complete sequence of the mucosal pathogen Ureaplasma urealyticum.</title>
        <authorList>
            <person name="Glass J.I."/>
            <person name="Lefkowitz E.J."/>
            <person name="Glass J.S."/>
            <person name="Heiner C.R."/>
            <person name="Chen E.Y."/>
            <person name="Cassell G.H."/>
        </authorList>
    </citation>
    <scope>NUCLEOTIDE SEQUENCE [LARGE SCALE GENOMIC DNA]</scope>
    <source>
        <strain>ATCC 700970</strain>
    </source>
</reference>
<feature type="chain" id="PRO_0000234807" description="Tyrosine--tRNA ligase">
    <location>
        <begin position="1"/>
        <end position="415"/>
    </location>
</feature>
<feature type="domain" description="S4 RNA-binding" evidence="1">
    <location>
        <begin position="346"/>
        <end position="413"/>
    </location>
</feature>
<feature type="short sequence motif" description="'HIGH' region">
    <location>
        <begin position="39"/>
        <end position="48"/>
    </location>
</feature>
<feature type="short sequence motif" description="'KMSKS' region">
    <location>
        <begin position="224"/>
        <end position="228"/>
    </location>
</feature>
<feature type="binding site" evidence="1">
    <location>
        <position position="34"/>
    </location>
    <ligand>
        <name>L-tyrosine</name>
        <dbReference type="ChEBI" id="CHEBI:58315"/>
    </ligand>
</feature>
<feature type="binding site" evidence="1">
    <location>
        <position position="162"/>
    </location>
    <ligand>
        <name>L-tyrosine</name>
        <dbReference type="ChEBI" id="CHEBI:58315"/>
    </ligand>
</feature>
<feature type="binding site" evidence="1">
    <location>
        <position position="166"/>
    </location>
    <ligand>
        <name>L-tyrosine</name>
        <dbReference type="ChEBI" id="CHEBI:58315"/>
    </ligand>
</feature>
<feature type="binding site" evidence="1">
    <location>
        <position position="227"/>
    </location>
    <ligand>
        <name>ATP</name>
        <dbReference type="ChEBI" id="CHEBI:30616"/>
    </ligand>
</feature>
<accession>Q9PR27</accession>
<protein>
    <recommendedName>
        <fullName evidence="1">Tyrosine--tRNA ligase</fullName>
        <ecNumber evidence="1">6.1.1.1</ecNumber>
    </recommendedName>
    <alternativeName>
        <fullName evidence="1">Tyrosyl-tRNA synthetase</fullName>
        <shortName evidence="1">TyrRS</shortName>
    </alternativeName>
</protein>
<sequence>MHSLIKDLKARNLINNITNEEKLIKALEKNKGIYVGFDPSADSLHLGNYIMIMLLKRFRLYNIKTLALVGGATGMIGDPSGKSAERNLLDKTILEKNIAKIKFQLEKFTNSQVINNYVFYENMTFLDFLRDVGKLININYLLEKEIINSRLSVGISYTEFSYNLLQGYDFLQLYKNDNIAIQAGGSDQWGNITTGIEMIRKNLGDDNIACGLTINLLTNSEGKKFGKSEKGAIYLDENKSTVYEMYQFLINQSDADVEKLLNFLTLIDVEEIKKIMQAHKNNPALRVAQKALAKAVVVDIHGQQKYEQALHISEVLFNGSISTLNQEELEIAIKSLPATKLDKDEIKIIDLLNLANISSSNRIARDFLNTGSILINDIKINDENFLVKKQDAINQKFSIIRKGKRNYFLILWNKD</sequence>
<comment type="function">
    <text evidence="1">Catalyzes the attachment of tyrosine to tRNA(Tyr) in a two-step reaction: tyrosine is first activated by ATP to form Tyr-AMP and then transferred to the acceptor end of tRNA(Tyr).</text>
</comment>
<comment type="catalytic activity">
    <reaction evidence="1">
        <text>tRNA(Tyr) + L-tyrosine + ATP = L-tyrosyl-tRNA(Tyr) + AMP + diphosphate + H(+)</text>
        <dbReference type="Rhea" id="RHEA:10220"/>
        <dbReference type="Rhea" id="RHEA-COMP:9706"/>
        <dbReference type="Rhea" id="RHEA-COMP:9707"/>
        <dbReference type="ChEBI" id="CHEBI:15378"/>
        <dbReference type="ChEBI" id="CHEBI:30616"/>
        <dbReference type="ChEBI" id="CHEBI:33019"/>
        <dbReference type="ChEBI" id="CHEBI:58315"/>
        <dbReference type="ChEBI" id="CHEBI:78442"/>
        <dbReference type="ChEBI" id="CHEBI:78536"/>
        <dbReference type="ChEBI" id="CHEBI:456215"/>
        <dbReference type="EC" id="6.1.1.1"/>
    </reaction>
</comment>
<comment type="subunit">
    <text evidence="1">Homodimer.</text>
</comment>
<comment type="subcellular location">
    <subcellularLocation>
        <location evidence="1">Cytoplasm</location>
    </subcellularLocation>
</comment>
<comment type="similarity">
    <text evidence="1">Belongs to the class-I aminoacyl-tRNA synthetase family. TyrS type 1 subfamily.</text>
</comment>
<proteinExistence type="inferred from homology"/>
<gene>
    <name evidence="1" type="primary">tyrS</name>
    <name type="ordered locus">UU117</name>
</gene>
<keyword id="KW-0030">Aminoacyl-tRNA synthetase</keyword>
<keyword id="KW-0067">ATP-binding</keyword>
<keyword id="KW-0963">Cytoplasm</keyword>
<keyword id="KW-0436">Ligase</keyword>
<keyword id="KW-0547">Nucleotide-binding</keyword>
<keyword id="KW-0648">Protein biosynthesis</keyword>
<keyword id="KW-1185">Reference proteome</keyword>
<keyword id="KW-0694">RNA-binding</keyword>
<name>SYY_UREPA</name>
<organism>
    <name type="scientific">Ureaplasma parvum serovar 3 (strain ATCC 700970)</name>
    <dbReference type="NCBI Taxonomy" id="273119"/>
    <lineage>
        <taxon>Bacteria</taxon>
        <taxon>Bacillati</taxon>
        <taxon>Mycoplasmatota</taxon>
        <taxon>Mycoplasmoidales</taxon>
        <taxon>Mycoplasmoidaceae</taxon>
        <taxon>Ureaplasma</taxon>
    </lineage>
</organism>